<evidence type="ECO:0000255" key="1">
    <source>
        <dbReference type="HAMAP-Rule" id="MF_00569"/>
    </source>
</evidence>
<proteinExistence type="inferred from homology"/>
<keyword id="KW-0004">4Fe-4S</keyword>
<keyword id="KW-0963">Cytoplasm</keyword>
<keyword id="KW-0408">Iron</keyword>
<keyword id="KW-0411">Iron-sulfur</keyword>
<keyword id="KW-0479">Metal-binding</keyword>
<keyword id="KW-0662">Pyridine nucleotide biosynthesis</keyword>
<keyword id="KW-1185">Reference proteome</keyword>
<keyword id="KW-0808">Transferase</keyword>
<organism>
    <name type="scientific">Geobacillus kaustophilus (strain HTA426)</name>
    <dbReference type="NCBI Taxonomy" id="235909"/>
    <lineage>
        <taxon>Bacteria</taxon>
        <taxon>Bacillati</taxon>
        <taxon>Bacillota</taxon>
        <taxon>Bacilli</taxon>
        <taxon>Bacillales</taxon>
        <taxon>Anoxybacillaceae</taxon>
        <taxon>Geobacillus</taxon>
        <taxon>Geobacillus thermoleovorans group</taxon>
    </lineage>
</organism>
<dbReference type="EC" id="2.5.1.72" evidence="1"/>
<dbReference type="EMBL" id="BA000043">
    <property type="protein sequence ID" value="BAD76884.1"/>
    <property type="molecule type" value="Genomic_DNA"/>
</dbReference>
<dbReference type="RefSeq" id="WP_011232075.1">
    <property type="nucleotide sequence ID" value="NC_006510.1"/>
</dbReference>
<dbReference type="SMR" id="Q5KWQ2"/>
<dbReference type="STRING" id="235909.GK2599"/>
<dbReference type="GeneID" id="32064501"/>
<dbReference type="KEGG" id="gka:GK2599"/>
<dbReference type="eggNOG" id="COG0379">
    <property type="taxonomic scope" value="Bacteria"/>
</dbReference>
<dbReference type="HOGENOM" id="CLU_047382_2_0_9"/>
<dbReference type="UniPathway" id="UPA00253">
    <property type="reaction ID" value="UER00327"/>
</dbReference>
<dbReference type="Proteomes" id="UP000001172">
    <property type="component" value="Chromosome"/>
</dbReference>
<dbReference type="GO" id="GO:0005829">
    <property type="term" value="C:cytosol"/>
    <property type="evidence" value="ECO:0007669"/>
    <property type="project" value="TreeGrafter"/>
</dbReference>
<dbReference type="GO" id="GO:0051539">
    <property type="term" value="F:4 iron, 4 sulfur cluster binding"/>
    <property type="evidence" value="ECO:0007669"/>
    <property type="project" value="UniProtKB-KW"/>
</dbReference>
<dbReference type="GO" id="GO:0046872">
    <property type="term" value="F:metal ion binding"/>
    <property type="evidence" value="ECO:0007669"/>
    <property type="project" value="UniProtKB-KW"/>
</dbReference>
<dbReference type="GO" id="GO:0008987">
    <property type="term" value="F:quinolinate synthetase A activity"/>
    <property type="evidence" value="ECO:0007669"/>
    <property type="project" value="UniProtKB-UniRule"/>
</dbReference>
<dbReference type="GO" id="GO:0034628">
    <property type="term" value="P:'de novo' NAD biosynthetic process from L-aspartate"/>
    <property type="evidence" value="ECO:0007669"/>
    <property type="project" value="TreeGrafter"/>
</dbReference>
<dbReference type="FunFam" id="3.40.50.10800:FF:000001">
    <property type="entry name" value="Quinolinate synthase A"/>
    <property type="match status" value="1"/>
</dbReference>
<dbReference type="Gene3D" id="3.40.50.10800">
    <property type="entry name" value="NadA-like"/>
    <property type="match status" value="3"/>
</dbReference>
<dbReference type="HAMAP" id="MF_00569">
    <property type="entry name" value="NadA_type3"/>
    <property type="match status" value="1"/>
</dbReference>
<dbReference type="InterPro" id="IPR003473">
    <property type="entry name" value="NadA"/>
</dbReference>
<dbReference type="InterPro" id="IPR036094">
    <property type="entry name" value="NadA_sf"/>
</dbReference>
<dbReference type="InterPro" id="IPR023515">
    <property type="entry name" value="Quinolinate_synth_A_type3"/>
</dbReference>
<dbReference type="NCBIfam" id="TIGR00550">
    <property type="entry name" value="nadA"/>
    <property type="match status" value="1"/>
</dbReference>
<dbReference type="NCBIfam" id="NF006880">
    <property type="entry name" value="PRK09375.2-1"/>
    <property type="match status" value="1"/>
</dbReference>
<dbReference type="NCBIfam" id="NF006883">
    <property type="entry name" value="PRK09375.2-4"/>
    <property type="match status" value="1"/>
</dbReference>
<dbReference type="PANTHER" id="PTHR30573:SF0">
    <property type="entry name" value="QUINOLINATE SYNTHASE, CHLOROPLASTIC"/>
    <property type="match status" value="1"/>
</dbReference>
<dbReference type="PANTHER" id="PTHR30573">
    <property type="entry name" value="QUINOLINATE SYNTHETASE A"/>
    <property type="match status" value="1"/>
</dbReference>
<dbReference type="Pfam" id="PF02445">
    <property type="entry name" value="NadA"/>
    <property type="match status" value="1"/>
</dbReference>
<dbReference type="SUPFAM" id="SSF142754">
    <property type="entry name" value="NadA-like"/>
    <property type="match status" value="1"/>
</dbReference>
<accession>Q5KWQ2</accession>
<feature type="chain" id="PRO_1000024991" description="Quinolinate synthase">
    <location>
        <begin position="1"/>
        <end position="367"/>
    </location>
</feature>
<feature type="binding site" evidence="1">
    <location>
        <position position="45"/>
    </location>
    <ligand>
        <name>iminosuccinate</name>
        <dbReference type="ChEBI" id="CHEBI:77875"/>
    </ligand>
</feature>
<feature type="binding site" evidence="1">
    <location>
        <position position="62"/>
    </location>
    <ligand>
        <name>iminosuccinate</name>
        <dbReference type="ChEBI" id="CHEBI:77875"/>
    </ligand>
</feature>
<feature type="binding site" evidence="1">
    <location>
        <position position="109"/>
    </location>
    <ligand>
        <name>[4Fe-4S] cluster</name>
        <dbReference type="ChEBI" id="CHEBI:49883"/>
    </ligand>
</feature>
<feature type="binding site" evidence="1">
    <location>
        <begin position="140"/>
        <end position="142"/>
    </location>
    <ligand>
        <name>iminosuccinate</name>
        <dbReference type="ChEBI" id="CHEBI:77875"/>
    </ligand>
</feature>
<feature type="binding site" evidence="1">
    <location>
        <position position="161"/>
    </location>
    <ligand>
        <name>iminosuccinate</name>
        <dbReference type="ChEBI" id="CHEBI:77875"/>
    </ligand>
</feature>
<feature type="binding site" evidence="1">
    <location>
        <position position="229"/>
    </location>
    <ligand>
        <name>[4Fe-4S] cluster</name>
        <dbReference type="ChEBI" id="CHEBI:49883"/>
    </ligand>
</feature>
<feature type="binding site" evidence="1">
    <location>
        <begin position="255"/>
        <end position="257"/>
    </location>
    <ligand>
        <name>iminosuccinate</name>
        <dbReference type="ChEBI" id="CHEBI:77875"/>
    </ligand>
</feature>
<feature type="binding site" evidence="1">
    <location>
        <position position="272"/>
    </location>
    <ligand>
        <name>iminosuccinate</name>
        <dbReference type="ChEBI" id="CHEBI:77875"/>
    </ligand>
</feature>
<feature type="binding site" evidence="1">
    <location>
        <position position="319"/>
    </location>
    <ligand>
        <name>[4Fe-4S] cluster</name>
        <dbReference type="ChEBI" id="CHEBI:49883"/>
    </ligand>
</feature>
<name>NADA_GEOKA</name>
<comment type="function">
    <text evidence="1">Catalyzes the condensation of iminoaspartate with dihydroxyacetone phosphate to form quinolinate.</text>
</comment>
<comment type="catalytic activity">
    <reaction evidence="1">
        <text>iminosuccinate + dihydroxyacetone phosphate = quinolinate + phosphate + 2 H2O + H(+)</text>
        <dbReference type="Rhea" id="RHEA:25888"/>
        <dbReference type="ChEBI" id="CHEBI:15377"/>
        <dbReference type="ChEBI" id="CHEBI:15378"/>
        <dbReference type="ChEBI" id="CHEBI:29959"/>
        <dbReference type="ChEBI" id="CHEBI:43474"/>
        <dbReference type="ChEBI" id="CHEBI:57642"/>
        <dbReference type="ChEBI" id="CHEBI:77875"/>
        <dbReference type="EC" id="2.5.1.72"/>
    </reaction>
    <physiologicalReaction direction="left-to-right" evidence="1">
        <dbReference type="Rhea" id="RHEA:25889"/>
    </physiologicalReaction>
</comment>
<comment type="cofactor">
    <cofactor evidence="1">
        <name>[4Fe-4S] cluster</name>
        <dbReference type="ChEBI" id="CHEBI:49883"/>
    </cofactor>
    <text evidence="1">Binds 1 [4Fe-4S] cluster per subunit.</text>
</comment>
<comment type="pathway">
    <text evidence="1">Cofactor biosynthesis; NAD(+) biosynthesis; quinolinate from iminoaspartate: step 1/1.</text>
</comment>
<comment type="subcellular location">
    <subcellularLocation>
        <location evidence="1">Cytoplasm</location>
    </subcellularLocation>
</comment>
<comment type="similarity">
    <text evidence="1">Belongs to the quinolinate synthase family. Type 3 subfamily.</text>
</comment>
<gene>
    <name evidence="1" type="primary">nadA</name>
    <name type="ordered locus">GK2599</name>
</gene>
<sequence length="367" mass="41593">MNVLEQLKRLDEMPKRYKTMERSELEARARAVKERFGRRLFIPGHHYQKDEVIQFADATGDSLQLAQLAAKNSEAEYIVFCGVHFMAETADILTSDDQTVILPDLRAGCSMADMADIFQVERAWAALIERFGETIVPLVYVNSTAAIKAFVGRHGGATVTSSNAKKMMAWAFSRNERIFFLPDQHLGRNTAYALGIRLDEMAVWDPHEETLQGADDLDKVKVILWKGHCSVHENFTVRQIEHIRRMKPGIHVIVHPECSWEVVQQADYAGSTKYIIETIRNAPPGTQWAIGTEMNLVNRLKHEHPDKEIVSLNPYMCPCLTMNRIDLPHFVWALESLEQGAIVNRITVPKDIAAEAKEALDRMLSLA</sequence>
<protein>
    <recommendedName>
        <fullName evidence="1">Quinolinate synthase</fullName>
        <ecNumber evidence="1">2.5.1.72</ecNumber>
    </recommendedName>
</protein>
<reference key="1">
    <citation type="journal article" date="2004" name="Nucleic Acids Res.">
        <title>Thermoadaptation trait revealed by the genome sequence of thermophilic Geobacillus kaustophilus.</title>
        <authorList>
            <person name="Takami H."/>
            <person name="Takaki Y."/>
            <person name="Chee G.-J."/>
            <person name="Nishi S."/>
            <person name="Shimamura S."/>
            <person name="Suzuki H."/>
            <person name="Matsui S."/>
            <person name="Uchiyama I."/>
        </authorList>
    </citation>
    <scope>NUCLEOTIDE SEQUENCE [LARGE SCALE GENOMIC DNA]</scope>
    <source>
        <strain>HTA426</strain>
    </source>
</reference>